<gene>
    <name type="primary">CYCP3-1</name>
    <name type="ordered locus">Os05g0398000</name>
    <name type="ordered locus">LOC_Os05g33040</name>
    <name type="ORF">OsJ_017705</name>
    <name type="ORF">OSJNBb0092G21.15</name>
    <name type="ORF">P0605G01.5</name>
</gene>
<evidence type="ECO:0000305" key="1"/>
<comment type="similarity">
    <text evidence="1">Belongs to the cyclin family. Cyclin U/P subfamily.</text>
</comment>
<comment type="sequence caution" evidence="1">
    <conflict type="erroneous gene model prediction">
        <sequence resource="EMBL-CDS" id="BAF17385"/>
    </conflict>
</comment>
<organism>
    <name type="scientific">Oryza sativa subsp. japonica</name>
    <name type="common">Rice</name>
    <dbReference type="NCBI Taxonomy" id="39947"/>
    <lineage>
        <taxon>Eukaryota</taxon>
        <taxon>Viridiplantae</taxon>
        <taxon>Streptophyta</taxon>
        <taxon>Embryophyta</taxon>
        <taxon>Tracheophyta</taxon>
        <taxon>Spermatophyta</taxon>
        <taxon>Magnoliopsida</taxon>
        <taxon>Liliopsida</taxon>
        <taxon>Poales</taxon>
        <taxon>Poaceae</taxon>
        <taxon>BOP clade</taxon>
        <taxon>Oryzoideae</taxon>
        <taxon>Oryzeae</taxon>
        <taxon>Oryzinae</taxon>
        <taxon>Oryza</taxon>
        <taxon>Oryza sativa</taxon>
    </lineage>
</organism>
<protein>
    <recommendedName>
        <fullName>Cyclin-P3-1</fullName>
        <shortName>CycP3;1</shortName>
    </recommendedName>
</protein>
<proteinExistence type="inferred from homology"/>
<accession>Q75HV0</accession>
<name>CCP31_ORYSJ</name>
<reference key="1">
    <citation type="journal article" date="2005" name="Mol. Genet. Genomics">
        <title>A fine physical map of the rice chromosome 5.</title>
        <authorList>
            <person name="Cheng C.-H."/>
            <person name="Chung M.C."/>
            <person name="Liu S.-M."/>
            <person name="Chen S.-K."/>
            <person name="Kao F.Y."/>
            <person name="Lin S.-J."/>
            <person name="Hsiao S.-H."/>
            <person name="Tseng I.C."/>
            <person name="Hsing Y.-I.C."/>
            <person name="Wu H.-P."/>
            <person name="Chen C.-S."/>
            <person name="Shaw J.-F."/>
            <person name="Wu J."/>
            <person name="Matsumoto T."/>
            <person name="Sasaki T."/>
            <person name="Chen H.-C."/>
            <person name="Chow T.-Y."/>
        </authorList>
    </citation>
    <scope>NUCLEOTIDE SEQUENCE [LARGE SCALE GENOMIC DNA]</scope>
    <source>
        <strain>cv. Nipponbare</strain>
    </source>
</reference>
<reference key="2">
    <citation type="journal article" date="2005" name="Nature">
        <title>The map-based sequence of the rice genome.</title>
        <authorList>
            <consortium name="International rice genome sequencing project (IRGSP)"/>
        </authorList>
    </citation>
    <scope>NUCLEOTIDE SEQUENCE [LARGE SCALE GENOMIC DNA]</scope>
    <source>
        <strain>cv. Nipponbare</strain>
    </source>
</reference>
<reference key="3">
    <citation type="journal article" date="2008" name="Nucleic Acids Res.">
        <title>The rice annotation project database (RAP-DB): 2008 update.</title>
        <authorList>
            <consortium name="The rice annotation project (RAP)"/>
        </authorList>
    </citation>
    <scope>GENOME REANNOTATION</scope>
    <source>
        <strain>cv. Nipponbare</strain>
    </source>
</reference>
<reference key="4">
    <citation type="journal article" date="2013" name="Rice">
        <title>Improvement of the Oryza sativa Nipponbare reference genome using next generation sequence and optical map data.</title>
        <authorList>
            <person name="Kawahara Y."/>
            <person name="de la Bastide M."/>
            <person name="Hamilton J.P."/>
            <person name="Kanamori H."/>
            <person name="McCombie W.R."/>
            <person name="Ouyang S."/>
            <person name="Schwartz D.C."/>
            <person name="Tanaka T."/>
            <person name="Wu J."/>
            <person name="Zhou S."/>
            <person name="Childs K.L."/>
            <person name="Davidson R.M."/>
            <person name="Lin H."/>
            <person name="Quesada-Ocampo L."/>
            <person name="Vaillancourt B."/>
            <person name="Sakai H."/>
            <person name="Lee S.S."/>
            <person name="Kim J."/>
            <person name="Numa H."/>
            <person name="Itoh T."/>
            <person name="Buell C.R."/>
            <person name="Matsumoto T."/>
        </authorList>
    </citation>
    <scope>GENOME REANNOTATION</scope>
    <source>
        <strain>cv. Nipponbare</strain>
    </source>
</reference>
<reference key="5">
    <citation type="journal article" date="2005" name="PLoS Biol.">
        <title>The genomes of Oryza sativa: a history of duplications.</title>
        <authorList>
            <person name="Yu J."/>
            <person name="Wang J."/>
            <person name="Lin W."/>
            <person name="Li S."/>
            <person name="Li H."/>
            <person name="Zhou J."/>
            <person name="Ni P."/>
            <person name="Dong W."/>
            <person name="Hu S."/>
            <person name="Zeng C."/>
            <person name="Zhang J."/>
            <person name="Zhang Y."/>
            <person name="Li R."/>
            <person name="Xu Z."/>
            <person name="Li S."/>
            <person name="Li X."/>
            <person name="Zheng H."/>
            <person name="Cong L."/>
            <person name="Lin L."/>
            <person name="Yin J."/>
            <person name="Geng J."/>
            <person name="Li G."/>
            <person name="Shi J."/>
            <person name="Liu J."/>
            <person name="Lv H."/>
            <person name="Li J."/>
            <person name="Wang J."/>
            <person name="Deng Y."/>
            <person name="Ran L."/>
            <person name="Shi X."/>
            <person name="Wang X."/>
            <person name="Wu Q."/>
            <person name="Li C."/>
            <person name="Ren X."/>
            <person name="Wang J."/>
            <person name="Wang X."/>
            <person name="Li D."/>
            <person name="Liu D."/>
            <person name="Zhang X."/>
            <person name="Ji Z."/>
            <person name="Zhao W."/>
            <person name="Sun Y."/>
            <person name="Zhang Z."/>
            <person name="Bao J."/>
            <person name="Han Y."/>
            <person name="Dong L."/>
            <person name="Ji J."/>
            <person name="Chen P."/>
            <person name="Wu S."/>
            <person name="Liu J."/>
            <person name="Xiao Y."/>
            <person name="Bu D."/>
            <person name="Tan J."/>
            <person name="Yang L."/>
            <person name="Ye C."/>
            <person name="Zhang J."/>
            <person name="Xu J."/>
            <person name="Zhou Y."/>
            <person name="Yu Y."/>
            <person name="Zhang B."/>
            <person name="Zhuang S."/>
            <person name="Wei H."/>
            <person name="Liu B."/>
            <person name="Lei M."/>
            <person name="Yu H."/>
            <person name="Li Y."/>
            <person name="Xu H."/>
            <person name="Wei S."/>
            <person name="He X."/>
            <person name="Fang L."/>
            <person name="Zhang Z."/>
            <person name="Zhang Y."/>
            <person name="Huang X."/>
            <person name="Su Z."/>
            <person name="Tong W."/>
            <person name="Li J."/>
            <person name="Tong Z."/>
            <person name="Li S."/>
            <person name="Ye J."/>
            <person name="Wang L."/>
            <person name="Fang L."/>
            <person name="Lei T."/>
            <person name="Chen C.-S."/>
            <person name="Chen H.-C."/>
            <person name="Xu Z."/>
            <person name="Li H."/>
            <person name="Huang H."/>
            <person name="Zhang F."/>
            <person name="Xu H."/>
            <person name="Li N."/>
            <person name="Zhao C."/>
            <person name="Li S."/>
            <person name="Dong L."/>
            <person name="Huang Y."/>
            <person name="Li L."/>
            <person name="Xi Y."/>
            <person name="Qi Q."/>
            <person name="Li W."/>
            <person name="Zhang B."/>
            <person name="Hu W."/>
            <person name="Zhang Y."/>
            <person name="Tian X."/>
            <person name="Jiao Y."/>
            <person name="Liang X."/>
            <person name="Jin J."/>
            <person name="Gao L."/>
            <person name="Zheng W."/>
            <person name="Hao B."/>
            <person name="Liu S.-M."/>
            <person name="Wang W."/>
            <person name="Yuan L."/>
            <person name="Cao M."/>
            <person name="McDermott J."/>
            <person name="Samudrala R."/>
            <person name="Wang J."/>
            <person name="Wong G.K.-S."/>
            <person name="Yang H."/>
        </authorList>
    </citation>
    <scope>NUCLEOTIDE SEQUENCE [LARGE SCALE GENOMIC DNA]</scope>
    <source>
        <strain>cv. Nipponbare</strain>
    </source>
</reference>
<reference key="6">
    <citation type="journal article" date="2006" name="Mol. Genet. Genomics">
        <title>Genome-wide analysis of cyclin family in rice (Oryza sativa L.).</title>
        <authorList>
            <person name="La H."/>
            <person name="Li J."/>
            <person name="Ji Z."/>
            <person name="Cheng Y."/>
            <person name="Li X."/>
            <person name="Jiang S."/>
            <person name="Venkatesh P.N."/>
            <person name="Ramachandran S."/>
        </authorList>
    </citation>
    <scope>GENE FAMILY</scope>
    <scope>NOMENCLATURE</scope>
</reference>
<keyword id="KW-0131">Cell cycle</keyword>
<keyword id="KW-0132">Cell division</keyword>
<keyword id="KW-0195">Cyclin</keyword>
<keyword id="KW-1185">Reference proteome</keyword>
<feature type="chain" id="PRO_0000287066" description="Cyclin-P3-1">
    <location>
        <begin position="1"/>
        <end position="236"/>
    </location>
</feature>
<sequence length="236" mass="26831">MGMGTFTTDESDKHEESYLSLGLTVSQSKKNNTEYPKVLLLLAAYLDRSVQKNEDLLDSNKIKDSSTIFHGHRAPDLSIKLYAERIFKYSECSPSCFVLALIYMERYLQQPHVYMTSLSVHRLLITSVVVAAKFTDDAFFNNAFYARVGGISTVEMNRLELDLLFNLDFRLKVDLETFGSYCLQLEKETMVLVIDRPIQQVHGVNSTKDLSRNSSIDESCKSELMRYSSQALQGCS</sequence>
<dbReference type="EMBL" id="AC132492">
    <property type="protein sequence ID" value="AAU10797.1"/>
    <property type="molecule type" value="Genomic_DNA"/>
</dbReference>
<dbReference type="EMBL" id="AC134932">
    <property type="protein sequence ID" value="AAT07648.1"/>
    <property type="molecule type" value="Genomic_DNA"/>
</dbReference>
<dbReference type="EMBL" id="AP008211">
    <property type="protein sequence ID" value="BAF17385.2"/>
    <property type="status" value="ALT_SEQ"/>
    <property type="molecule type" value="Genomic_DNA"/>
</dbReference>
<dbReference type="EMBL" id="AP014961">
    <property type="status" value="NOT_ANNOTATED_CDS"/>
    <property type="molecule type" value="Genomic_DNA"/>
</dbReference>
<dbReference type="EMBL" id="CM000142">
    <property type="status" value="NOT_ANNOTATED_CDS"/>
    <property type="molecule type" value="Genomic_DNA"/>
</dbReference>
<dbReference type="RefSeq" id="XP_015640468.1">
    <property type="nucleotide sequence ID" value="XM_015784982.1"/>
</dbReference>
<dbReference type="RefSeq" id="XP_015640469.1">
    <property type="nucleotide sequence ID" value="XM_015784983.1"/>
</dbReference>
<dbReference type="RefSeq" id="XP_015640470.1">
    <property type="nucleotide sequence ID" value="XM_015784984.1"/>
</dbReference>
<dbReference type="RefSeq" id="XP_015640471.1">
    <property type="nucleotide sequence ID" value="XM_015784985.1"/>
</dbReference>
<dbReference type="SMR" id="Q75HV0"/>
<dbReference type="FunCoup" id="Q75HV0">
    <property type="interactions" value="361"/>
</dbReference>
<dbReference type="STRING" id="39947.Q75HV0"/>
<dbReference type="PaxDb" id="39947-Q75HV0"/>
<dbReference type="EnsemblPlants" id="Os05t0398000-02">
    <property type="protein sequence ID" value="Os05t0398000-02"/>
    <property type="gene ID" value="Os05g0398000"/>
</dbReference>
<dbReference type="GeneID" id="4338711"/>
<dbReference type="Gramene" id="Os05t0398000-02">
    <property type="protein sequence ID" value="Os05t0398000-02"/>
    <property type="gene ID" value="Os05g0398000"/>
</dbReference>
<dbReference type="KEGG" id="dosa:Os05g0398000"/>
<dbReference type="KEGG" id="osa:4338711"/>
<dbReference type="eggNOG" id="KOG1674">
    <property type="taxonomic scope" value="Eukaryota"/>
</dbReference>
<dbReference type="HOGENOM" id="CLU_154852_0_0_1"/>
<dbReference type="InParanoid" id="Q75HV0"/>
<dbReference type="OrthoDB" id="337735at2759"/>
<dbReference type="Proteomes" id="UP000000763">
    <property type="component" value="Chromosome 5"/>
</dbReference>
<dbReference type="Proteomes" id="UP000007752">
    <property type="component" value="Chromosome 5"/>
</dbReference>
<dbReference type="Proteomes" id="UP000059680">
    <property type="component" value="Chromosome 5"/>
</dbReference>
<dbReference type="GO" id="GO:0019901">
    <property type="term" value="F:protein kinase binding"/>
    <property type="evidence" value="ECO:0007669"/>
    <property type="project" value="InterPro"/>
</dbReference>
<dbReference type="GO" id="GO:0051301">
    <property type="term" value="P:cell division"/>
    <property type="evidence" value="ECO:0007669"/>
    <property type="project" value="UniProtKB-KW"/>
</dbReference>
<dbReference type="Gene3D" id="1.10.472.10">
    <property type="entry name" value="Cyclin-like"/>
    <property type="match status" value="1"/>
</dbReference>
<dbReference type="InterPro" id="IPR036915">
    <property type="entry name" value="Cyclin-like_sf"/>
</dbReference>
<dbReference type="InterPro" id="IPR012389">
    <property type="entry name" value="Cyclin_P/U"/>
</dbReference>
<dbReference type="InterPro" id="IPR013922">
    <property type="entry name" value="Cyclin_PHO80-like"/>
</dbReference>
<dbReference type="PANTHER" id="PTHR15615">
    <property type="match status" value="1"/>
</dbReference>
<dbReference type="PANTHER" id="PTHR15615:SF108">
    <property type="entry name" value="PROTEIN CNPPD1"/>
    <property type="match status" value="1"/>
</dbReference>
<dbReference type="Pfam" id="PF08613">
    <property type="entry name" value="Cyclin"/>
    <property type="match status" value="1"/>
</dbReference>
<dbReference type="PIRSF" id="PIRSF027110">
    <property type="entry name" value="PREG"/>
    <property type="match status" value="1"/>
</dbReference>
<dbReference type="SUPFAM" id="SSF47954">
    <property type="entry name" value="Cyclin-like"/>
    <property type="match status" value="1"/>
</dbReference>